<proteinExistence type="inferred from homology"/>
<reference key="1">
    <citation type="journal article" date="1999" name="Nature">
        <title>Evidence for lateral gene transfer between Archaea and Bacteria from genome sequence of Thermotoga maritima.</title>
        <authorList>
            <person name="Nelson K.E."/>
            <person name="Clayton R.A."/>
            <person name="Gill S.R."/>
            <person name="Gwinn M.L."/>
            <person name="Dodson R.J."/>
            <person name="Haft D.H."/>
            <person name="Hickey E.K."/>
            <person name="Peterson J.D."/>
            <person name="Nelson W.C."/>
            <person name="Ketchum K.A."/>
            <person name="McDonald L.A."/>
            <person name="Utterback T.R."/>
            <person name="Malek J.A."/>
            <person name="Linher K.D."/>
            <person name="Garrett M.M."/>
            <person name="Stewart A.M."/>
            <person name="Cotton M.D."/>
            <person name="Pratt M.S."/>
            <person name="Phillips C.A."/>
            <person name="Richardson D.L."/>
            <person name="Heidelberg J.F."/>
            <person name="Sutton G.G."/>
            <person name="Fleischmann R.D."/>
            <person name="Eisen J.A."/>
            <person name="White O."/>
            <person name="Salzberg S.L."/>
            <person name="Smith H.O."/>
            <person name="Venter J.C."/>
            <person name="Fraser C.M."/>
        </authorList>
    </citation>
    <scope>NUCLEOTIDE SEQUENCE [LARGE SCALE GENOMIC DNA]</scope>
    <source>
        <strain>ATCC 43589 / DSM 3109 / JCM 10099 / NBRC 100826 / MSB8</strain>
    </source>
</reference>
<name>TDXH_THEMA</name>
<evidence type="ECO:0000255" key="1">
    <source>
        <dbReference type="HAMAP-Rule" id="MF_00401"/>
    </source>
</evidence>
<dbReference type="EC" id="1.11.1.24" evidence="1"/>
<dbReference type="EMBL" id="AE000512">
    <property type="protein sequence ID" value="AAD35889.1"/>
    <property type="molecule type" value="Genomic_DNA"/>
</dbReference>
<dbReference type="PIR" id="H72330">
    <property type="entry name" value="H72330"/>
</dbReference>
<dbReference type="RefSeq" id="NP_228616.1">
    <property type="nucleotide sequence ID" value="NC_000853.1"/>
</dbReference>
<dbReference type="RefSeq" id="WP_004080855.1">
    <property type="nucleotide sequence ID" value="NC_000853.1"/>
</dbReference>
<dbReference type="SMR" id="Q9WZR4"/>
<dbReference type="FunCoup" id="Q9WZR4">
    <property type="interactions" value="309"/>
</dbReference>
<dbReference type="STRING" id="243274.TM_0807"/>
<dbReference type="PaxDb" id="243274-THEMA_00615"/>
<dbReference type="EnsemblBacteria" id="AAD35889">
    <property type="protein sequence ID" value="AAD35889"/>
    <property type="gene ID" value="TM_0807"/>
</dbReference>
<dbReference type="KEGG" id="tma:TM0807"/>
<dbReference type="KEGG" id="tmi:THEMA_00615"/>
<dbReference type="KEGG" id="tmm:Tmari_0808"/>
<dbReference type="KEGG" id="tmw:THMA_0826"/>
<dbReference type="eggNOG" id="COG0450">
    <property type="taxonomic scope" value="Bacteria"/>
</dbReference>
<dbReference type="InParanoid" id="Q9WZR4"/>
<dbReference type="OrthoDB" id="9812811at2"/>
<dbReference type="BRENDA" id="1.11.1.24">
    <property type="organism ID" value="6331"/>
</dbReference>
<dbReference type="Proteomes" id="UP000008183">
    <property type="component" value="Chromosome"/>
</dbReference>
<dbReference type="GO" id="GO:0005829">
    <property type="term" value="C:cytosol"/>
    <property type="evidence" value="ECO:0000318"/>
    <property type="project" value="GO_Central"/>
</dbReference>
<dbReference type="GO" id="GO:0004601">
    <property type="term" value="F:peroxidase activity"/>
    <property type="evidence" value="ECO:0000318"/>
    <property type="project" value="GO_Central"/>
</dbReference>
<dbReference type="GO" id="GO:0140824">
    <property type="term" value="F:thioredoxin-dependent peroxiredoxin activity"/>
    <property type="evidence" value="ECO:0007669"/>
    <property type="project" value="UniProtKB-EC"/>
</dbReference>
<dbReference type="GO" id="GO:0045454">
    <property type="term" value="P:cell redox homeostasis"/>
    <property type="evidence" value="ECO:0000318"/>
    <property type="project" value="GO_Central"/>
</dbReference>
<dbReference type="CDD" id="cd03016">
    <property type="entry name" value="PRX_1cys"/>
    <property type="match status" value="1"/>
</dbReference>
<dbReference type="FunFam" id="3.30.1020.10:FF:000002">
    <property type="entry name" value="Peroxiredoxin"/>
    <property type="match status" value="1"/>
</dbReference>
<dbReference type="FunFam" id="3.40.30.10:FF:000011">
    <property type="entry name" value="Peroxiredoxin PRX1"/>
    <property type="match status" value="1"/>
</dbReference>
<dbReference type="Gene3D" id="3.30.1020.10">
    <property type="entry name" value="Antioxidant, Horf6, Chain A, domain2"/>
    <property type="match status" value="1"/>
</dbReference>
<dbReference type="Gene3D" id="3.40.30.10">
    <property type="entry name" value="Glutaredoxin"/>
    <property type="match status" value="1"/>
</dbReference>
<dbReference type="HAMAP" id="MF_00401">
    <property type="entry name" value="Peroxiredoxin"/>
    <property type="match status" value="1"/>
</dbReference>
<dbReference type="InterPro" id="IPR000866">
    <property type="entry name" value="AhpC/TSA"/>
</dbReference>
<dbReference type="InterPro" id="IPR050217">
    <property type="entry name" value="Peroxiredoxin"/>
</dbReference>
<dbReference type="InterPro" id="IPR024706">
    <property type="entry name" value="Peroxiredoxin_AhpC-typ"/>
</dbReference>
<dbReference type="InterPro" id="IPR019479">
    <property type="entry name" value="Peroxiredoxin_C"/>
</dbReference>
<dbReference type="InterPro" id="IPR022915">
    <property type="entry name" value="Peroxiredoxin_TDXH"/>
</dbReference>
<dbReference type="InterPro" id="IPR045020">
    <property type="entry name" value="PRX_1cys"/>
</dbReference>
<dbReference type="InterPro" id="IPR036249">
    <property type="entry name" value="Thioredoxin-like_sf"/>
</dbReference>
<dbReference type="InterPro" id="IPR013766">
    <property type="entry name" value="Thioredoxin_domain"/>
</dbReference>
<dbReference type="NCBIfam" id="NF009668">
    <property type="entry name" value="PRK13189.1"/>
    <property type="match status" value="1"/>
</dbReference>
<dbReference type="PANTHER" id="PTHR10681">
    <property type="entry name" value="THIOREDOXIN PEROXIDASE"/>
    <property type="match status" value="1"/>
</dbReference>
<dbReference type="PANTHER" id="PTHR10681:SF128">
    <property type="entry name" value="THIOREDOXIN-DEPENDENT PEROXIDE REDUCTASE, MITOCHONDRIAL"/>
    <property type="match status" value="1"/>
</dbReference>
<dbReference type="Pfam" id="PF10417">
    <property type="entry name" value="1-cysPrx_C"/>
    <property type="match status" value="1"/>
</dbReference>
<dbReference type="Pfam" id="PF00578">
    <property type="entry name" value="AhpC-TSA"/>
    <property type="match status" value="1"/>
</dbReference>
<dbReference type="PIRSF" id="PIRSF000239">
    <property type="entry name" value="AHPC"/>
    <property type="match status" value="1"/>
</dbReference>
<dbReference type="SUPFAM" id="SSF52833">
    <property type="entry name" value="Thioredoxin-like"/>
    <property type="match status" value="1"/>
</dbReference>
<dbReference type="PROSITE" id="PS51352">
    <property type="entry name" value="THIOREDOXIN_2"/>
    <property type="match status" value="1"/>
</dbReference>
<keyword id="KW-0049">Antioxidant</keyword>
<keyword id="KW-0963">Cytoplasm</keyword>
<keyword id="KW-1015">Disulfide bond</keyword>
<keyword id="KW-0560">Oxidoreductase</keyword>
<keyword id="KW-0575">Peroxidase</keyword>
<keyword id="KW-0676">Redox-active center</keyword>
<keyword id="KW-1185">Reference proteome</keyword>
<accession>Q9WZR4</accession>
<gene>
    <name type="ordered locus">TM_0807</name>
</gene>
<protein>
    <recommendedName>
        <fullName evidence="1">Peroxiredoxin</fullName>
        <ecNumber evidence="1">1.11.1.24</ecNumber>
    </recommendedName>
    <alternativeName>
        <fullName evidence="1">Thioredoxin peroxidase</fullName>
    </alternativeName>
    <alternativeName>
        <fullName evidence="1">Thioredoxin-dependent peroxiredoxin</fullName>
    </alternativeName>
</protein>
<organism>
    <name type="scientific">Thermotoga maritima (strain ATCC 43589 / DSM 3109 / JCM 10099 / NBRC 100826 / MSB8)</name>
    <dbReference type="NCBI Taxonomy" id="243274"/>
    <lineage>
        <taxon>Bacteria</taxon>
        <taxon>Thermotogati</taxon>
        <taxon>Thermotogota</taxon>
        <taxon>Thermotogae</taxon>
        <taxon>Thermotogales</taxon>
        <taxon>Thermotogaceae</taxon>
        <taxon>Thermotoga</taxon>
    </lineage>
</organism>
<sequence>MEGRIPLIGEEFPRVEVKTTHGKKVLPDDFRGKWFVLFSHPADFTPVCTTEFVAFQKRYDEFRKLNTELIGLSIDQVFSHIKWIEWIKEKLGVEIEFPVIADDLGEVSRRLGLIHPNKGTNTVRAVFIVDPNGIIRAIVYYPQEVGRNIDEILRAVKALQTSDEKGVAIPANWPSNELINDSVIVPPASSVEEARKRLESKDFECYDWWFCYKKV</sequence>
<feature type="chain" id="PRO_0000135177" description="Peroxiredoxin">
    <location>
        <begin position="1"/>
        <end position="215"/>
    </location>
</feature>
<feature type="domain" description="Thioredoxin" evidence="1">
    <location>
        <begin position="6"/>
        <end position="161"/>
    </location>
</feature>
<feature type="active site" description="Cysteine sulfenic acid (-SOH) intermediate" evidence="1">
    <location>
        <position position="48"/>
    </location>
</feature>
<feature type="binding site" evidence="1">
    <location>
        <position position="124"/>
    </location>
    <ligand>
        <name>substrate</name>
    </ligand>
</feature>
<feature type="disulfide bond" description="Interchain (with C-211); in linked form" evidence="1">
    <location>
        <position position="48"/>
    </location>
</feature>
<feature type="disulfide bond" description="Alternate" evidence="1">
    <location>
        <begin position="205"/>
        <end position="211"/>
    </location>
</feature>
<feature type="disulfide bond" description="Interchain (with C-48); in linked form" evidence="1">
    <location>
        <position position="211"/>
    </location>
</feature>
<comment type="function">
    <text evidence="1">Thiol-specific peroxidase that catalyzes the reduction of hydrogen peroxide and organic hydroperoxides to water and alcohols, respectively. Plays a role in cell protection against oxidative stress by detoxifying peroxides.</text>
</comment>
<comment type="catalytic activity">
    <reaction evidence="1">
        <text>a hydroperoxide + [thioredoxin]-dithiol = an alcohol + [thioredoxin]-disulfide + H2O</text>
        <dbReference type="Rhea" id="RHEA:62620"/>
        <dbReference type="Rhea" id="RHEA-COMP:10698"/>
        <dbReference type="Rhea" id="RHEA-COMP:10700"/>
        <dbReference type="ChEBI" id="CHEBI:15377"/>
        <dbReference type="ChEBI" id="CHEBI:29950"/>
        <dbReference type="ChEBI" id="CHEBI:30879"/>
        <dbReference type="ChEBI" id="CHEBI:35924"/>
        <dbReference type="ChEBI" id="CHEBI:50058"/>
        <dbReference type="EC" id="1.11.1.24"/>
    </reaction>
</comment>
<comment type="subunit">
    <text evidence="1">Homodecamer. Pentamer of dimers that assemble into a ring structure.</text>
</comment>
<comment type="subcellular location">
    <subcellularLocation>
        <location evidence="1">Cytoplasm</location>
    </subcellularLocation>
</comment>
<comment type="miscellaneous">
    <text evidence="1">The active site is a conserved redox-active cysteine residue, the peroxidatic cysteine (C(P)), which makes the nucleophilic attack on the peroxide substrate. The peroxide oxidizes the C(P)-SH to cysteine sulfenic acid (C(P)-SOH), which then reacts with another cysteine residue, the resolving cysteine (C(R)), to form a disulfide bridge. The disulfide is subsequently reduced by an appropriate electron donor to complete the catalytic cycle. Although the primary sequence of this enzyme is similar to those of the 1-Cys Prx6 enzymes, its catalytic properties resemble those of the typical 2-Cys Prxs and C(R) is provided by the other dimeric subunit to form an intersubunit disulfide. The disulfide is subsequently reduced by thioredoxin.</text>
</comment>
<comment type="similarity">
    <text evidence="1">Belongs to the peroxiredoxin family. Prx6 subfamily.</text>
</comment>